<evidence type="ECO:0000250" key="1"/>
<evidence type="ECO:0000255" key="2"/>
<evidence type="ECO:0000255" key="3">
    <source>
        <dbReference type="PROSITE-ProRule" id="PRU10107"/>
    </source>
</evidence>
<evidence type="ECO:0000305" key="4"/>
<protein>
    <recommendedName>
        <fullName>Type I iodothyronine deiodinase</fullName>
        <ecNumber>1.21.99.4</ecNumber>
    </recommendedName>
    <alternativeName>
        <fullName>5DI</fullName>
    </alternativeName>
    <alternativeName>
        <fullName>DIOI</fullName>
    </alternativeName>
    <alternativeName>
        <fullName>Type 1 DI</fullName>
    </alternativeName>
    <alternativeName>
        <fullName>Type-I 5'-deiodinase</fullName>
    </alternativeName>
</protein>
<accession>O42449</accession>
<sequence>MFLQKIVLYLSTACMFCYMLGKFLMLVILQFFSPSLAKKFILRMGEKITMTQNPRFNYEDWGLTFMSLAFIKTASSHMWLSLGEEAFVGGEAPDSPVVTMDREKTSISKYLKGNRPLVLSFGSCTUPPFMYKLDEFKQLVKDFSDVADFLVIYIAEAHSTDGWAFKNNYDINQHQSLEDRLSAAQVLVQSEPLCPVVVDEMTDVTTIKYGALPERLFILQAGKVLYKGGKGPWGYNPAEVRSFLEKIK</sequence>
<reference key="1">
    <citation type="journal article" date="1997" name="Endocrinology">
        <title>Characterization of a propylthiouracil-insensitive type I iodothyronine deiodinase.</title>
        <authorList>
            <person name="Sanders J.P."/>
            <person name="van der Geyten S."/>
            <person name="Kaptein E."/>
            <person name="Darras V.M."/>
            <person name="Kuehn E.R."/>
            <person name="Leonard J.L."/>
            <person name="Visser T.J."/>
        </authorList>
    </citation>
    <scope>NUCLEOTIDE SEQUENCE [MRNA]</scope>
    <source>
        <tissue>Kidney</tissue>
    </source>
</reference>
<organism>
    <name type="scientific">Oreochromis niloticus</name>
    <name type="common">Nile tilapia</name>
    <name type="synonym">Tilapia nilotica</name>
    <dbReference type="NCBI Taxonomy" id="8128"/>
    <lineage>
        <taxon>Eukaryota</taxon>
        <taxon>Metazoa</taxon>
        <taxon>Chordata</taxon>
        <taxon>Craniata</taxon>
        <taxon>Vertebrata</taxon>
        <taxon>Euteleostomi</taxon>
        <taxon>Actinopterygii</taxon>
        <taxon>Neopterygii</taxon>
        <taxon>Teleostei</taxon>
        <taxon>Neoteleostei</taxon>
        <taxon>Acanthomorphata</taxon>
        <taxon>Ovalentaria</taxon>
        <taxon>Cichlomorphae</taxon>
        <taxon>Cichliformes</taxon>
        <taxon>Cichlidae</taxon>
        <taxon>African cichlids</taxon>
        <taxon>Pseudocrenilabrinae</taxon>
        <taxon>Oreochromini</taxon>
        <taxon>Oreochromis</taxon>
    </lineage>
</organism>
<proteinExistence type="evidence at transcript level"/>
<name>IOD1_ORENI</name>
<dbReference type="EC" id="1.21.99.4"/>
<dbReference type="EMBL" id="Y11109">
    <property type="protein sequence ID" value="CAA71995.1"/>
    <property type="molecule type" value="mRNA"/>
</dbReference>
<dbReference type="RefSeq" id="NP_001266442.2">
    <property type="nucleotide sequence ID" value="NM_001279513.2"/>
</dbReference>
<dbReference type="STRING" id="8128.ENSONIP00000047175"/>
<dbReference type="Ensembl" id="ENSONIT00000043403.1">
    <property type="protein sequence ID" value="ENSONIP00000047175.1"/>
    <property type="gene ID" value="ENSONIG00000035478.1"/>
</dbReference>
<dbReference type="GeneID" id="100534571"/>
<dbReference type="KEGG" id="onl:100534571"/>
<dbReference type="CTD" id="1733"/>
<dbReference type="GeneTree" id="ENSGT00940000154482"/>
<dbReference type="InParanoid" id="O42449"/>
<dbReference type="OMA" id="TFGSCTX"/>
<dbReference type="OrthoDB" id="428577at2759"/>
<dbReference type="Proteomes" id="UP000005207">
    <property type="component" value="Linkage group LG23"/>
</dbReference>
<dbReference type="GO" id="GO:0005789">
    <property type="term" value="C:endoplasmic reticulum membrane"/>
    <property type="evidence" value="ECO:0007669"/>
    <property type="project" value="UniProtKB-SubCell"/>
</dbReference>
<dbReference type="GO" id="GO:0004800">
    <property type="term" value="F:thyroxine 5'-deiodinase activity"/>
    <property type="evidence" value="ECO:0007669"/>
    <property type="project" value="UniProtKB-EC"/>
</dbReference>
<dbReference type="GO" id="GO:0042446">
    <property type="term" value="P:hormone biosynthetic process"/>
    <property type="evidence" value="ECO:0007669"/>
    <property type="project" value="UniProtKB-KW"/>
</dbReference>
<dbReference type="GO" id="GO:0061074">
    <property type="term" value="P:regulation of neural retina development"/>
    <property type="evidence" value="ECO:0007669"/>
    <property type="project" value="Ensembl"/>
</dbReference>
<dbReference type="GO" id="GO:0042403">
    <property type="term" value="P:thyroid hormone metabolic process"/>
    <property type="evidence" value="ECO:0007669"/>
    <property type="project" value="TreeGrafter"/>
</dbReference>
<dbReference type="FunFam" id="3.40.30.10:FF:000192">
    <property type="entry name" value="Iodothyronine deiodinase"/>
    <property type="match status" value="1"/>
</dbReference>
<dbReference type="Gene3D" id="3.40.30.10">
    <property type="entry name" value="Glutaredoxin"/>
    <property type="match status" value="1"/>
</dbReference>
<dbReference type="InterPro" id="IPR000643">
    <property type="entry name" value="Iodothyronine_deiodinase"/>
</dbReference>
<dbReference type="InterPro" id="IPR008261">
    <property type="entry name" value="Iodothyronine_deiodinase_AS"/>
</dbReference>
<dbReference type="InterPro" id="IPR027252">
    <property type="entry name" value="Iodothyronine_deiodinase_I/III"/>
</dbReference>
<dbReference type="InterPro" id="IPR036249">
    <property type="entry name" value="Thioredoxin-like_sf"/>
</dbReference>
<dbReference type="PANTHER" id="PTHR11781">
    <property type="entry name" value="IODOTHYRONINE DEIODINASE"/>
    <property type="match status" value="1"/>
</dbReference>
<dbReference type="PANTHER" id="PTHR11781:SF22">
    <property type="entry name" value="TYPE I IODOTHYRONINE DEIODINASE"/>
    <property type="match status" value="1"/>
</dbReference>
<dbReference type="Pfam" id="PF00837">
    <property type="entry name" value="T4_deiodinase"/>
    <property type="match status" value="1"/>
</dbReference>
<dbReference type="PIRSF" id="PIRSF001330">
    <property type="entry name" value="IOD"/>
    <property type="match status" value="1"/>
</dbReference>
<dbReference type="PIRSF" id="PIRSF500144">
    <property type="entry name" value="IODI_III"/>
    <property type="match status" value="1"/>
</dbReference>
<dbReference type="SUPFAM" id="SSF52833">
    <property type="entry name" value="Thioredoxin-like"/>
    <property type="match status" value="1"/>
</dbReference>
<dbReference type="PROSITE" id="PS01205">
    <property type="entry name" value="T4_DEIODINASE"/>
    <property type="match status" value="1"/>
</dbReference>
<gene>
    <name type="primary">dio1</name>
</gene>
<keyword id="KW-0256">Endoplasmic reticulum</keyword>
<keyword id="KW-0472">Membrane</keyword>
<keyword id="KW-0560">Oxidoreductase</keyword>
<keyword id="KW-1185">Reference proteome</keyword>
<keyword id="KW-0712">Selenocysteine</keyword>
<keyword id="KW-0893">Thyroid hormones biosynthesis</keyword>
<keyword id="KW-0812">Transmembrane</keyword>
<keyword id="KW-1133">Transmembrane helix</keyword>
<feature type="chain" id="PRO_0000154316" description="Type I iodothyronine deiodinase">
    <location>
        <begin position="1"/>
        <end position="248"/>
    </location>
</feature>
<feature type="transmembrane region" description="Helical" evidence="2">
    <location>
        <begin position="7"/>
        <end position="29"/>
    </location>
</feature>
<feature type="active site">
    <location>
        <position position="126"/>
    </location>
</feature>
<feature type="non-standard amino acid" description="Selenocysteine">
    <location>
        <position position="126"/>
    </location>
</feature>
<comment type="function">
    <text>Responsible for the deiodination of T4 (3,5,3',5'-tetraiodothyronine) into T3 (3,5,3'-triiodothyronine) and of T3 into T2 (3,3'-diiodothyronine).</text>
</comment>
<comment type="catalytic activity">
    <reaction evidence="3">
        <text>3,3',5-triiodo-L-thyronine + iodide + A + H(+) = L-thyroxine + AH2</text>
        <dbReference type="Rhea" id="RHEA:19745"/>
        <dbReference type="ChEBI" id="CHEBI:13193"/>
        <dbReference type="ChEBI" id="CHEBI:15378"/>
        <dbReference type="ChEBI" id="CHEBI:16382"/>
        <dbReference type="ChEBI" id="CHEBI:17499"/>
        <dbReference type="ChEBI" id="CHEBI:58448"/>
        <dbReference type="ChEBI" id="CHEBI:533015"/>
        <dbReference type="EC" id="1.21.99.4"/>
    </reaction>
</comment>
<comment type="subcellular location">
    <subcellularLocation>
        <location evidence="1">Endoplasmic reticulum membrane</location>
        <topology evidence="1">Single-pass membrane protein</topology>
    </subcellularLocation>
</comment>
<comment type="similarity">
    <text evidence="4">Belongs to the iodothyronine deiodinase family.</text>
</comment>